<accession>P19588</accession>
<accession>Q39665</accession>
<feature type="signal peptide">
    <location>
        <begin position="1"/>
        <end position="22"/>
    </location>
</feature>
<feature type="chain" id="PRO_0000017613" description="Lectin DB58 subunit alpha">
    <location>
        <begin position="23"/>
        <end position="275"/>
    </location>
</feature>
<feature type="chain" id="PRO_0000017614" description="Lectin DB58 subunit beta">
    <location>
        <begin position="23"/>
        <end position="264"/>
    </location>
</feature>
<feature type="glycosylation site" description="N-linked (GlcNAc...) asparagine">
    <location>
        <position position="34"/>
    </location>
</feature>
<feature type="glycosylation site" description="N-linked (GlcNAc...) asparagine">
    <location>
        <position position="101"/>
    </location>
</feature>
<feature type="sequence conflict" description="In Ref. 1; AAA33142." evidence="2" ref="1">
    <original>LS</original>
    <variation>FF</variation>
    <location>
        <begin position="236"/>
        <end position="237"/>
    </location>
</feature>
<feature type="strand" evidence="3">
    <location>
        <begin position="24"/>
        <end position="31"/>
    </location>
</feature>
<feature type="strand" evidence="3">
    <location>
        <begin position="38"/>
        <end position="42"/>
    </location>
</feature>
<feature type="strand" evidence="3">
    <location>
        <begin position="48"/>
        <end position="52"/>
    </location>
</feature>
<feature type="strand" evidence="3">
    <location>
        <begin position="67"/>
        <end position="74"/>
    </location>
</feature>
<feature type="turn" evidence="3">
    <location>
        <begin position="81"/>
        <end position="83"/>
    </location>
</feature>
<feature type="strand" evidence="3">
    <location>
        <begin position="88"/>
        <end position="96"/>
    </location>
</feature>
<feature type="helix" evidence="3">
    <location>
        <begin position="102"/>
        <end position="104"/>
    </location>
</feature>
<feature type="strand" evidence="3">
    <location>
        <begin position="108"/>
        <end position="115"/>
    </location>
</feature>
<feature type="turn" evidence="3">
    <location>
        <begin position="127"/>
        <end position="129"/>
    </location>
</feature>
<feature type="helix" evidence="3">
    <location>
        <begin position="137"/>
        <end position="139"/>
    </location>
</feature>
<feature type="strand" evidence="3">
    <location>
        <begin position="142"/>
        <end position="147"/>
    </location>
</feature>
<feature type="strand" evidence="3">
    <location>
        <begin position="160"/>
        <end position="169"/>
    </location>
</feature>
<feature type="strand" evidence="3">
    <location>
        <begin position="171"/>
        <end position="175"/>
    </location>
</feature>
<feature type="strand" evidence="3">
    <location>
        <begin position="182"/>
        <end position="191"/>
    </location>
</feature>
<feature type="turn" evidence="3">
    <location>
        <begin position="192"/>
        <end position="195"/>
    </location>
</feature>
<feature type="strand" evidence="3">
    <location>
        <begin position="196"/>
        <end position="203"/>
    </location>
</feature>
<feature type="helix" evidence="3">
    <location>
        <begin position="204"/>
        <end position="206"/>
    </location>
</feature>
<feature type="strand" evidence="3">
    <location>
        <begin position="208"/>
        <end position="215"/>
    </location>
</feature>
<feature type="helix" evidence="3">
    <location>
        <begin position="218"/>
        <end position="221"/>
    </location>
</feature>
<feature type="strand" evidence="3">
    <location>
        <begin position="224"/>
        <end position="233"/>
    </location>
</feature>
<feature type="strand" evidence="3">
    <location>
        <begin position="245"/>
        <end position="255"/>
    </location>
</feature>
<feature type="helix" evidence="3">
    <location>
        <begin position="266"/>
        <end position="273"/>
    </location>
</feature>
<name>LEC5_VIGUC</name>
<evidence type="ECO:0000269" key="1">
    <source>
    </source>
</evidence>
<evidence type="ECO:0000305" key="2"/>
<evidence type="ECO:0007829" key="3">
    <source>
        <dbReference type="PDB" id="1LUL"/>
    </source>
</evidence>
<organism>
    <name type="scientific">Vigna unguiculata subsp. cylindrica</name>
    <name type="common">Horse gram</name>
    <name type="synonym">Dolichos biflorus</name>
    <dbReference type="NCBI Taxonomy" id="3091605"/>
    <lineage>
        <taxon>Eukaryota</taxon>
        <taxon>Viridiplantae</taxon>
        <taxon>Streptophyta</taxon>
        <taxon>Embryophyta</taxon>
        <taxon>Tracheophyta</taxon>
        <taxon>Spermatophyta</taxon>
        <taxon>Magnoliopsida</taxon>
        <taxon>eudicotyledons</taxon>
        <taxon>Gunneridae</taxon>
        <taxon>Pentapetalae</taxon>
        <taxon>rosids</taxon>
        <taxon>fabids</taxon>
        <taxon>Fabales</taxon>
        <taxon>Fabaceae</taxon>
        <taxon>Papilionoideae</taxon>
        <taxon>50 kb inversion clade</taxon>
        <taxon>NPAAA clade</taxon>
        <taxon>indigoferoid/millettioid clade</taxon>
        <taxon>Phaseoleae</taxon>
        <taxon>Vigna</taxon>
    </lineage>
</organism>
<reference key="1">
    <citation type="journal article" date="1988" name="J. Biol. Chem.">
        <title>cDNA cloning, primary structure, and in vitro biosynthesis of the DB58 lectin from Dolichos biflorus.</title>
        <authorList>
            <person name="Schnell D.J."/>
            <person name="Etzler M.E."/>
        </authorList>
    </citation>
    <scope>NUCLEOTIDE SEQUENCE [MRNA]</scope>
</reference>
<reference key="2">
    <citation type="journal article" date="1990" name="J. Biol. Chem.">
        <title>Two lectin genes differentially expressed in Dolichos biflorus differ primarily by a 116-base pair sequence in their 5' flanking regions.</title>
        <authorList>
            <person name="Harada J.J."/>
            <person name="Spadoro-Tank J."/>
            <person name="Maxwell J.C."/>
            <person name="Schnell D.J."/>
            <person name="Etzler M.E."/>
        </authorList>
    </citation>
    <scope>NUCLEOTIDE SEQUENCE [GENOMIC DNA]</scope>
</reference>
<reference key="3">
    <citation type="journal article" date="1994" name="Biochemistry">
        <title>Isolation and characterization of subunits of DB58, a lectin from the stems and leaves of Dolichos biflorus.</title>
        <authorList>
            <person name="Etzler M.E."/>
        </authorList>
    </citation>
    <scope>PROTEIN SEQUENCE OF 255-275</scope>
    <scope>PROTEOLYTIC PROCESSING</scope>
    <source>
        <tissue>Leaf</tissue>
        <tissue>Stem</tissue>
    </source>
</reference>
<reference key="4">
    <citation type="journal article" date="1999" name="J. Mol. Biol.">
        <title>Carbohydrate binding, quaternary structure and a novel hydrophobic binding site in two legume lectin oligomers from Dolichos biflorus.</title>
        <authorList>
            <person name="Hamelryck T.W."/>
            <person name="Loris R."/>
            <person name="Bouckaert J."/>
            <person name="Dao-Thi M.-H."/>
            <person name="Strecker G."/>
            <person name="Imberty A."/>
            <person name="Fernandez E."/>
            <person name="Wyns L."/>
            <person name="Etzler M.E."/>
        </authorList>
    </citation>
    <scope>X-RAY CRYSTALLOGRAPHY (3.3 ANGSTROMS)</scope>
</reference>
<comment type="function">
    <text>Metalloglycoprotein, containing Ca, Mg, Mn, and Zn and the carbohydrates galactose, glucosamine, mannose, and fucose. It agglutinates erythrocytes of blood group A1.</text>
</comment>
<comment type="subunit">
    <text>Heterodimer, composed of an alpha and a beta subunit derived from a single precursor.</text>
</comment>
<comment type="PTM">
    <text evidence="1">Leu-264 is missing in a major portion of the beta subunit, suggesting an origin by sequential removal of amino acids rather than a processing by endoproteolytic cleavage.</text>
</comment>
<comment type="similarity">
    <text evidence="2">Belongs to the leguminous lectin family.</text>
</comment>
<dbReference type="EMBL" id="M23216">
    <property type="protein sequence ID" value="AAA33142.1"/>
    <property type="molecule type" value="mRNA"/>
</dbReference>
<dbReference type="EMBL" id="M34271">
    <property type="protein sequence ID" value="AAA33140.1"/>
    <property type="molecule type" value="Genomic_DNA"/>
</dbReference>
<dbReference type="PIR" id="A31972">
    <property type="entry name" value="A31972"/>
</dbReference>
<dbReference type="PDB" id="1G7Y">
    <property type="method" value="X-ray"/>
    <property type="resolution" value="2.50 A"/>
    <property type="chains" value="A/B/C/D/E/F=23-275"/>
</dbReference>
<dbReference type="PDB" id="1LUL">
    <property type="method" value="X-ray"/>
    <property type="resolution" value="3.30 A"/>
    <property type="chains" value="A/B/C/D/E/F=23-275"/>
</dbReference>
<dbReference type="PDBsum" id="1G7Y"/>
<dbReference type="PDBsum" id="1LUL"/>
<dbReference type="SMR" id="P19588"/>
<dbReference type="UniLectin" id="P19588"/>
<dbReference type="EvolutionaryTrace" id="P19588"/>
<dbReference type="GO" id="GO:0005537">
    <property type="term" value="F:D-mannose binding"/>
    <property type="evidence" value="ECO:0007669"/>
    <property type="project" value="UniProtKB-KW"/>
</dbReference>
<dbReference type="CDD" id="cd06899">
    <property type="entry name" value="lectin_legume_LecRK_Arcelin_ConA"/>
    <property type="match status" value="1"/>
</dbReference>
<dbReference type="Gene3D" id="2.60.120.200">
    <property type="match status" value="1"/>
</dbReference>
<dbReference type="InterPro" id="IPR013320">
    <property type="entry name" value="ConA-like_dom_sf"/>
</dbReference>
<dbReference type="InterPro" id="IPR016363">
    <property type="entry name" value="L-lectin"/>
</dbReference>
<dbReference type="InterPro" id="IPR000985">
    <property type="entry name" value="Lectin_LegA_CS"/>
</dbReference>
<dbReference type="InterPro" id="IPR019825">
    <property type="entry name" value="Lectin_legB_Mn/Ca_BS"/>
</dbReference>
<dbReference type="InterPro" id="IPR001220">
    <property type="entry name" value="Legume_lectin_dom"/>
</dbReference>
<dbReference type="InterPro" id="IPR050258">
    <property type="entry name" value="Leguminous_Lectin"/>
</dbReference>
<dbReference type="PANTHER" id="PTHR32401">
    <property type="entry name" value="CONCANAVALIN A-LIKE LECTIN FAMILY PROTEIN"/>
    <property type="match status" value="1"/>
</dbReference>
<dbReference type="PANTHER" id="PTHR32401:SF45">
    <property type="entry name" value="LECTIN"/>
    <property type="match status" value="1"/>
</dbReference>
<dbReference type="Pfam" id="PF00139">
    <property type="entry name" value="Lectin_legB"/>
    <property type="match status" value="1"/>
</dbReference>
<dbReference type="PIRSF" id="PIRSF002690">
    <property type="entry name" value="L-type_lectin_plant"/>
    <property type="match status" value="1"/>
</dbReference>
<dbReference type="SUPFAM" id="SSF49899">
    <property type="entry name" value="Concanavalin A-like lectins/glucanases"/>
    <property type="match status" value="1"/>
</dbReference>
<dbReference type="PROSITE" id="PS00308">
    <property type="entry name" value="LECTIN_LEGUME_ALPHA"/>
    <property type="match status" value="1"/>
</dbReference>
<dbReference type="PROSITE" id="PS00307">
    <property type="entry name" value="LECTIN_LEGUME_BETA"/>
    <property type="match status" value="1"/>
</dbReference>
<protein>
    <recommendedName>
        <fullName>Lectin DB58</fullName>
    </recommendedName>
    <component>
        <recommendedName>
            <fullName>Lectin DB58 subunit alpha</fullName>
        </recommendedName>
    </component>
    <component>
        <recommendedName>
            <fullName>Lectin DB58 subunit beta</fullName>
        </recommendedName>
    </component>
</protein>
<sequence>MASSTVSVVLSLFLLLLTQAYSADIQSFSFKNFNSSSFILQGDATVSSSKLRLTKVKGNGLPTLSSLGRAFYSSPIQIYDKSTGAVASWATSFTANIFAPNKSSSADGIAFALVPVGSEPKSNSGFLGVFDSDVYDNSAQTVAVEFDTFSNTDWDPTSRHIGIDVNSIKSIRTASWGLANGQNAEILITYNAATSLLVASLVHPSRRTSYIVSERVDITNELPEYVSIGFSATTGLSEGYTETHDVLSWSFASKLPDDSTTEPLDIASYLVRNVL</sequence>
<proteinExistence type="evidence at protein level"/>
<keyword id="KW-0002">3D-structure</keyword>
<keyword id="KW-0106">Calcium</keyword>
<keyword id="KW-0903">Direct protein sequencing</keyword>
<keyword id="KW-0325">Glycoprotein</keyword>
<keyword id="KW-0430">Lectin</keyword>
<keyword id="KW-0465">Mannose-binding</keyword>
<keyword id="KW-0732">Signal</keyword>